<comment type="function">
    <text evidence="1">Catalyzes the attachment of isoleucine to tRNA(Ile). As IleRS can inadvertently accommodate and process structurally similar amino acids such as valine, to avoid such errors it has two additional distinct tRNA(Ile)-dependent editing activities. One activity is designated as 'pretransfer' editing and involves the hydrolysis of activated Val-AMP. The other activity is designated 'posttransfer' editing and involves deacylation of mischarged Val-tRNA(Ile).</text>
</comment>
<comment type="catalytic activity">
    <reaction evidence="1">
        <text>tRNA(Ile) + L-isoleucine + ATP = L-isoleucyl-tRNA(Ile) + AMP + diphosphate</text>
        <dbReference type="Rhea" id="RHEA:11060"/>
        <dbReference type="Rhea" id="RHEA-COMP:9666"/>
        <dbReference type="Rhea" id="RHEA-COMP:9695"/>
        <dbReference type="ChEBI" id="CHEBI:30616"/>
        <dbReference type="ChEBI" id="CHEBI:33019"/>
        <dbReference type="ChEBI" id="CHEBI:58045"/>
        <dbReference type="ChEBI" id="CHEBI:78442"/>
        <dbReference type="ChEBI" id="CHEBI:78528"/>
        <dbReference type="ChEBI" id="CHEBI:456215"/>
        <dbReference type="EC" id="6.1.1.5"/>
    </reaction>
</comment>
<comment type="cofactor">
    <cofactor evidence="1">
        <name>Zn(2+)</name>
        <dbReference type="ChEBI" id="CHEBI:29105"/>
    </cofactor>
    <text evidence="1">Binds 1 zinc ion per subunit.</text>
</comment>
<comment type="subunit">
    <text evidence="1">Monomer.</text>
</comment>
<comment type="subcellular location">
    <subcellularLocation>
        <location evidence="1">Cytoplasm</location>
    </subcellularLocation>
</comment>
<comment type="domain">
    <text evidence="1">IleRS has two distinct active sites: one for aminoacylation and one for editing. The misactivated valine is translocated from the active site to the editing site, which sterically excludes the correctly activated isoleucine. The single editing site contains two valyl binding pockets, one specific for each substrate (Val-AMP or Val-tRNA(Ile)).</text>
</comment>
<comment type="similarity">
    <text evidence="1">Belongs to the class-I aminoacyl-tRNA synthetase family. IleS type 1 subfamily.</text>
</comment>
<proteinExistence type="inferred from homology"/>
<sequence length="959" mass="108907">MTESGSYKDTVNLPKTSFDMRANAIKREPEIQKFWEENKIYDRLFENNPGELFILHDGPPYANGSLHIGHALNKILKDIINRYQMLRGRKVRYVPGWDCHGLPIELKVLQNMKSAERQNLTPLQLRQKAKEFGLATVDNQRQNFKRYGIWGDWDNPYLTLKPEYEAAQIGVFGQMFLKGYIYRGLKPVHWSPSSKTALAEAELEYPEGHVSRSIYAAFPVTSLAEAVKPLLAEYQSDLGVAIWTTTPWTIPGNLAVAVNADLNYAVVEVSQSEAQSKFKYLIVAADLVERLSSTLGLELTLKATFKGNDLEHTTYRHPLFDRESPIVVGGDYITTESGTGLVHTAPGHGQEDYIVGQRYGLPILAPVDDNGNFTQEAGEFAGLNVLGDGNQAVIDALAAAGSLLKEEPYPHKYPYDWRTKKPTIFRATEQWFASVEGFREEALKAIATVKWIPAQGENRITPMVAERSDWCISRQRSWGVPIPVFYDEATGEPLLNEEIINHVQGIIAEKGSDAWWELSVEELLPESYRQNGKSYRRGTDTMDVWFDSGSSWASVVQQRPELRYPADIYLEGSDQHRGWFQSSLLTSVAVNDIAPYKTVLTHGFALDEQGRKMSKSEGNVVDPNTIIEGGKNQKVEPAYGADVLRLWVSSVDYSGDVRIGKNIIKQMNDVRGKIRNTARFLLGSLDDFDPEKDTVPFEELPELDRYMLHRITEVFEEVTEAFESFQFFRFFQTVQNFCVVDLSNFYLDVAKDRLYISAKDAFRRRSCQTVLKIALDNLARAIAPVLSHTAEDIWQYLPYKTPYKSVFEAGWVQVEEKWRNPELAEFWSELRKIRDKVNKTLEIYRLQKTIGSSLEAKVVVHVFDERLRQRLQALNPNTHGSVEKSNGVDELRYLFLASQVEVPSEPIFEEGDDAGIYIQVYKADGEKCDRCWNYSTHVGESAEHPLICERCVAALAGEF</sequence>
<protein>
    <recommendedName>
        <fullName evidence="1">Isoleucine--tRNA ligase</fullName>
        <ecNumber evidence="1">6.1.1.5</ecNumber>
    </recommendedName>
    <alternativeName>
        <fullName evidence="1">Isoleucyl-tRNA synthetase</fullName>
        <shortName evidence="1">IleRS</shortName>
    </alternativeName>
</protein>
<name>SYI_NOSP7</name>
<accession>B2IZP5</accession>
<gene>
    <name evidence="1" type="primary">ileS</name>
    <name type="ordered locus">Npun_F1478</name>
</gene>
<reference key="1">
    <citation type="journal article" date="2013" name="Plant Physiol.">
        <title>A Nostoc punctiforme Sugar Transporter Necessary to Establish a Cyanobacterium-Plant Symbiosis.</title>
        <authorList>
            <person name="Ekman M."/>
            <person name="Picossi S."/>
            <person name="Campbell E.L."/>
            <person name="Meeks J.C."/>
            <person name="Flores E."/>
        </authorList>
    </citation>
    <scope>NUCLEOTIDE SEQUENCE [LARGE SCALE GENOMIC DNA]</scope>
    <source>
        <strain>ATCC 29133 / PCC 73102</strain>
    </source>
</reference>
<feature type="chain" id="PRO_1000189185" description="Isoleucine--tRNA ligase">
    <location>
        <begin position="1"/>
        <end position="959"/>
    </location>
</feature>
<feature type="short sequence motif" description="'HIGH' region">
    <location>
        <begin position="60"/>
        <end position="70"/>
    </location>
</feature>
<feature type="short sequence motif" description="'KMSKS' region">
    <location>
        <begin position="612"/>
        <end position="616"/>
    </location>
</feature>
<feature type="binding site" evidence="1">
    <location>
        <position position="571"/>
    </location>
    <ligand>
        <name>L-isoleucyl-5'-AMP</name>
        <dbReference type="ChEBI" id="CHEBI:178002"/>
    </ligand>
</feature>
<feature type="binding site" evidence="1">
    <location>
        <position position="615"/>
    </location>
    <ligand>
        <name>ATP</name>
        <dbReference type="ChEBI" id="CHEBI:30616"/>
    </ligand>
</feature>
<feature type="binding site" evidence="1">
    <location>
        <position position="928"/>
    </location>
    <ligand>
        <name>Zn(2+)</name>
        <dbReference type="ChEBI" id="CHEBI:29105"/>
    </ligand>
</feature>
<feature type="binding site" evidence="1">
    <location>
        <position position="931"/>
    </location>
    <ligand>
        <name>Zn(2+)</name>
        <dbReference type="ChEBI" id="CHEBI:29105"/>
    </ligand>
</feature>
<feature type="binding site" evidence="1">
    <location>
        <position position="948"/>
    </location>
    <ligand>
        <name>Zn(2+)</name>
        <dbReference type="ChEBI" id="CHEBI:29105"/>
    </ligand>
</feature>
<feature type="binding site" evidence="1">
    <location>
        <position position="951"/>
    </location>
    <ligand>
        <name>Zn(2+)</name>
        <dbReference type="ChEBI" id="CHEBI:29105"/>
    </ligand>
</feature>
<keyword id="KW-0030">Aminoacyl-tRNA synthetase</keyword>
<keyword id="KW-0067">ATP-binding</keyword>
<keyword id="KW-0963">Cytoplasm</keyword>
<keyword id="KW-0436">Ligase</keyword>
<keyword id="KW-0479">Metal-binding</keyword>
<keyword id="KW-0547">Nucleotide-binding</keyword>
<keyword id="KW-0648">Protein biosynthesis</keyword>
<keyword id="KW-1185">Reference proteome</keyword>
<keyword id="KW-0862">Zinc</keyword>
<evidence type="ECO:0000255" key="1">
    <source>
        <dbReference type="HAMAP-Rule" id="MF_02002"/>
    </source>
</evidence>
<dbReference type="EC" id="6.1.1.5" evidence="1"/>
<dbReference type="EMBL" id="CP001037">
    <property type="protein sequence ID" value="ACC80175.1"/>
    <property type="molecule type" value="Genomic_DNA"/>
</dbReference>
<dbReference type="RefSeq" id="WP_012408194.1">
    <property type="nucleotide sequence ID" value="NC_010628.1"/>
</dbReference>
<dbReference type="SMR" id="B2IZP5"/>
<dbReference type="STRING" id="63737.Npun_F1478"/>
<dbReference type="EnsemblBacteria" id="ACC80175">
    <property type="protein sequence ID" value="ACC80175"/>
    <property type="gene ID" value="Npun_F1478"/>
</dbReference>
<dbReference type="KEGG" id="npu:Npun_F1478"/>
<dbReference type="eggNOG" id="COG0060">
    <property type="taxonomic scope" value="Bacteria"/>
</dbReference>
<dbReference type="HOGENOM" id="CLU_001493_7_0_3"/>
<dbReference type="OrthoDB" id="9810365at2"/>
<dbReference type="PhylomeDB" id="B2IZP5"/>
<dbReference type="Proteomes" id="UP000001191">
    <property type="component" value="Chromosome"/>
</dbReference>
<dbReference type="GO" id="GO:0005737">
    <property type="term" value="C:cytoplasm"/>
    <property type="evidence" value="ECO:0007669"/>
    <property type="project" value="UniProtKB-SubCell"/>
</dbReference>
<dbReference type="GO" id="GO:0002161">
    <property type="term" value="F:aminoacyl-tRNA deacylase activity"/>
    <property type="evidence" value="ECO:0007669"/>
    <property type="project" value="InterPro"/>
</dbReference>
<dbReference type="GO" id="GO:0005524">
    <property type="term" value="F:ATP binding"/>
    <property type="evidence" value="ECO:0007669"/>
    <property type="project" value="UniProtKB-UniRule"/>
</dbReference>
<dbReference type="GO" id="GO:0004822">
    <property type="term" value="F:isoleucine-tRNA ligase activity"/>
    <property type="evidence" value="ECO:0007669"/>
    <property type="project" value="UniProtKB-UniRule"/>
</dbReference>
<dbReference type="GO" id="GO:0000049">
    <property type="term" value="F:tRNA binding"/>
    <property type="evidence" value="ECO:0007669"/>
    <property type="project" value="InterPro"/>
</dbReference>
<dbReference type="GO" id="GO:0008270">
    <property type="term" value="F:zinc ion binding"/>
    <property type="evidence" value="ECO:0007669"/>
    <property type="project" value="UniProtKB-UniRule"/>
</dbReference>
<dbReference type="GO" id="GO:0006428">
    <property type="term" value="P:isoleucyl-tRNA aminoacylation"/>
    <property type="evidence" value="ECO:0007669"/>
    <property type="project" value="UniProtKB-UniRule"/>
</dbReference>
<dbReference type="CDD" id="cd07960">
    <property type="entry name" value="Anticodon_Ia_Ile_BEm"/>
    <property type="match status" value="1"/>
</dbReference>
<dbReference type="CDD" id="cd00818">
    <property type="entry name" value="IleRS_core"/>
    <property type="match status" value="1"/>
</dbReference>
<dbReference type="FunFam" id="1.10.730.20:FF:000001">
    <property type="entry name" value="Isoleucine--tRNA ligase"/>
    <property type="match status" value="1"/>
</dbReference>
<dbReference type="FunFam" id="3.40.50.620:FF:000152">
    <property type="entry name" value="Isoleucine--tRNA ligase"/>
    <property type="match status" value="1"/>
</dbReference>
<dbReference type="FunFam" id="3.90.740.10:FF:000013">
    <property type="entry name" value="Isoleucine--tRNA ligase, chloroplastic/mitochondrial"/>
    <property type="match status" value="1"/>
</dbReference>
<dbReference type="Gene3D" id="1.10.730.20">
    <property type="match status" value="1"/>
</dbReference>
<dbReference type="Gene3D" id="3.40.50.620">
    <property type="entry name" value="HUPs"/>
    <property type="match status" value="2"/>
</dbReference>
<dbReference type="Gene3D" id="1.10.10.830">
    <property type="entry name" value="Ile-tRNA synthetase CP2 domain-like"/>
    <property type="match status" value="1"/>
</dbReference>
<dbReference type="Gene3D" id="3.90.740.10">
    <property type="entry name" value="Valyl/Leucyl/Isoleucyl-tRNA synthetase, editing domain"/>
    <property type="match status" value="1"/>
</dbReference>
<dbReference type="HAMAP" id="MF_02002">
    <property type="entry name" value="Ile_tRNA_synth_type1"/>
    <property type="match status" value="1"/>
</dbReference>
<dbReference type="InterPro" id="IPR001412">
    <property type="entry name" value="aa-tRNA-synth_I_CS"/>
</dbReference>
<dbReference type="InterPro" id="IPR002300">
    <property type="entry name" value="aa-tRNA-synth_Ia"/>
</dbReference>
<dbReference type="InterPro" id="IPR033708">
    <property type="entry name" value="Anticodon_Ile_BEm"/>
</dbReference>
<dbReference type="InterPro" id="IPR002301">
    <property type="entry name" value="Ile-tRNA-ligase"/>
</dbReference>
<dbReference type="InterPro" id="IPR023585">
    <property type="entry name" value="Ile-tRNA-ligase_type1"/>
</dbReference>
<dbReference type="InterPro" id="IPR050081">
    <property type="entry name" value="Ile-tRNA_ligase"/>
</dbReference>
<dbReference type="InterPro" id="IPR013155">
    <property type="entry name" value="M/V/L/I-tRNA-synth_anticd-bd"/>
</dbReference>
<dbReference type="InterPro" id="IPR014729">
    <property type="entry name" value="Rossmann-like_a/b/a_fold"/>
</dbReference>
<dbReference type="InterPro" id="IPR009080">
    <property type="entry name" value="tRNAsynth_Ia_anticodon-bd"/>
</dbReference>
<dbReference type="InterPro" id="IPR009008">
    <property type="entry name" value="Val/Leu/Ile-tRNA-synth_edit"/>
</dbReference>
<dbReference type="InterPro" id="IPR010663">
    <property type="entry name" value="Znf_FPG/IleRS"/>
</dbReference>
<dbReference type="NCBIfam" id="TIGR00392">
    <property type="entry name" value="ileS"/>
    <property type="match status" value="1"/>
</dbReference>
<dbReference type="PANTHER" id="PTHR42765:SF1">
    <property type="entry name" value="ISOLEUCINE--TRNA LIGASE, MITOCHONDRIAL"/>
    <property type="match status" value="1"/>
</dbReference>
<dbReference type="PANTHER" id="PTHR42765">
    <property type="entry name" value="SOLEUCYL-TRNA SYNTHETASE"/>
    <property type="match status" value="1"/>
</dbReference>
<dbReference type="Pfam" id="PF08264">
    <property type="entry name" value="Anticodon_1"/>
    <property type="match status" value="1"/>
</dbReference>
<dbReference type="Pfam" id="PF00133">
    <property type="entry name" value="tRNA-synt_1"/>
    <property type="match status" value="1"/>
</dbReference>
<dbReference type="Pfam" id="PF06827">
    <property type="entry name" value="zf-FPG_IleRS"/>
    <property type="match status" value="1"/>
</dbReference>
<dbReference type="PRINTS" id="PR00984">
    <property type="entry name" value="TRNASYNTHILE"/>
</dbReference>
<dbReference type="SUPFAM" id="SSF47323">
    <property type="entry name" value="Anticodon-binding domain of a subclass of class I aminoacyl-tRNA synthetases"/>
    <property type="match status" value="1"/>
</dbReference>
<dbReference type="SUPFAM" id="SSF52374">
    <property type="entry name" value="Nucleotidylyl transferase"/>
    <property type="match status" value="1"/>
</dbReference>
<dbReference type="SUPFAM" id="SSF50677">
    <property type="entry name" value="ValRS/IleRS/LeuRS editing domain"/>
    <property type="match status" value="1"/>
</dbReference>
<dbReference type="PROSITE" id="PS00178">
    <property type="entry name" value="AA_TRNA_LIGASE_I"/>
    <property type="match status" value="1"/>
</dbReference>
<organism>
    <name type="scientific">Nostoc punctiforme (strain ATCC 29133 / PCC 73102)</name>
    <dbReference type="NCBI Taxonomy" id="63737"/>
    <lineage>
        <taxon>Bacteria</taxon>
        <taxon>Bacillati</taxon>
        <taxon>Cyanobacteriota</taxon>
        <taxon>Cyanophyceae</taxon>
        <taxon>Nostocales</taxon>
        <taxon>Nostocaceae</taxon>
        <taxon>Nostoc</taxon>
    </lineage>
</organism>